<accession>Q12P60</accession>
<keyword id="KW-0963">Cytoplasm</keyword>
<keyword id="KW-0274">FAD</keyword>
<keyword id="KW-0285">Flavoprotein</keyword>
<keyword id="KW-0489">Methyltransferase</keyword>
<keyword id="KW-0511">Multifunctional enzyme</keyword>
<keyword id="KW-0560">Oxidoreductase</keyword>
<keyword id="KW-1185">Reference proteome</keyword>
<keyword id="KW-0949">S-adenosyl-L-methionine</keyword>
<keyword id="KW-0808">Transferase</keyword>
<keyword id="KW-0819">tRNA processing</keyword>
<evidence type="ECO:0000255" key="1">
    <source>
        <dbReference type="HAMAP-Rule" id="MF_01102"/>
    </source>
</evidence>
<sequence>MPSCYEHSAQSPRPLSVLAEYFPKGYSVFYKANTETCPEANQYSKALVDFYTQELNQAEDTNLTLGQMGLGDGVSLLLLWQSLLQCRKNNPELSRLKVHLLIFEPHAISALELKQLWQALGLFDANSPVAPQAEQFIAGKMAQINGAQRFILEQGQLRIDVHFGDLHSNLTELMTPEHRVTHWHCLPHIAHTQTEFAETQASQLQFNQVQSNANQLNQAILWQMGRLSQDNASLYLDGENFKPSASDNNALTDCTLIKMATQAGFSRYSPNLFQASSDSCNAIPLGERRALRQQQENRQAHCPVPNSLGERRQAVNNSDSIAIIGGGIAGACLALSLAERGKAVTLYCKDDKLGDGATGNRQGAIYPLLTPENSHLSQFFQQAFLFSRRRLLALLHEVYPIGHQLCGVLQTGFDERSEARLEKIIQGQHWPEEIAYAVSPEQASALAGVSIDKPGFYYPNGGWICPFEFARACLEKAKSLANVEVKLNSTISCIKPLAANVDSKDASGCTSQASGTLWGLYHQGEIVGSHQQVVLASGASITAFEQTQALQMSGFRGQVSHVPSKGELAKLNTVICANGYLTPAFNSTHCVGASYVKDPEHLDFCSDEQAENGQKMQQSFPNLEWPQDIDVSDRNARVGVRMVTRDHFPMMGCAPDIEEIISRYQTLNASPQASQNNYAKQCQQYWQQTPAPVHHNLFVLGGLGSRGLSSAPLAAECLAAQLCGEIAPISATTLALLNPNRMWMRKLLKGKALC</sequence>
<feature type="chain" id="PRO_0000348026" description="tRNA 5-methylaminomethyl-2-thiouridine biosynthesis bifunctional protein MnmC">
    <location>
        <begin position="1"/>
        <end position="754"/>
    </location>
</feature>
<feature type="region of interest" description="tRNA (mnm(5)s(2)U34)-methyltransferase">
    <location>
        <begin position="1"/>
        <end position="320"/>
    </location>
</feature>
<feature type="region of interest" description="FAD-dependent cmnm(5)s(2)U34 oxidoreductase">
    <location>
        <begin position="324"/>
        <end position="754"/>
    </location>
</feature>
<comment type="function">
    <text evidence="1">Catalyzes the last two steps in the biosynthesis of 5-methylaminomethyl-2-thiouridine (mnm(5)s(2)U) at the wobble position (U34) in tRNA. Catalyzes the FAD-dependent demodification of cmnm(5)s(2)U34 to nm(5)s(2)U34, followed by the transfer of a methyl group from S-adenosyl-L-methionine to nm(5)s(2)U34, to form mnm(5)s(2)U34.</text>
</comment>
<comment type="catalytic activity">
    <reaction evidence="1">
        <text>5-aminomethyl-2-thiouridine(34) in tRNA + S-adenosyl-L-methionine = 5-methylaminomethyl-2-thiouridine(34) in tRNA + S-adenosyl-L-homocysteine + H(+)</text>
        <dbReference type="Rhea" id="RHEA:19569"/>
        <dbReference type="Rhea" id="RHEA-COMP:10195"/>
        <dbReference type="Rhea" id="RHEA-COMP:10197"/>
        <dbReference type="ChEBI" id="CHEBI:15378"/>
        <dbReference type="ChEBI" id="CHEBI:57856"/>
        <dbReference type="ChEBI" id="CHEBI:59789"/>
        <dbReference type="ChEBI" id="CHEBI:74454"/>
        <dbReference type="ChEBI" id="CHEBI:74455"/>
        <dbReference type="EC" id="2.1.1.61"/>
    </reaction>
</comment>
<comment type="cofactor">
    <cofactor evidence="1">
        <name>FAD</name>
        <dbReference type="ChEBI" id="CHEBI:57692"/>
    </cofactor>
</comment>
<comment type="subcellular location">
    <subcellularLocation>
        <location evidence="1">Cytoplasm</location>
    </subcellularLocation>
</comment>
<comment type="similarity">
    <text evidence="1">In the N-terminal section; belongs to the methyltransferase superfamily. tRNA (mnm(5)s(2)U34)-methyltransferase family.</text>
</comment>
<comment type="similarity">
    <text evidence="1">In the C-terminal section; belongs to the DAO family.</text>
</comment>
<protein>
    <recommendedName>
        <fullName evidence="1">tRNA 5-methylaminomethyl-2-thiouridine biosynthesis bifunctional protein MnmC</fullName>
        <shortName evidence="1">tRNA mnm(5)s(2)U biosynthesis bifunctional protein</shortName>
    </recommendedName>
    <domain>
        <recommendedName>
            <fullName evidence="1">tRNA (mnm(5)s(2)U34)-methyltransferase</fullName>
            <ecNumber evidence="1">2.1.1.61</ecNumber>
        </recommendedName>
    </domain>
    <domain>
        <recommendedName>
            <fullName evidence="1">FAD-dependent cmnm(5)s(2)U34 oxidoreductase</fullName>
            <ecNumber evidence="1">1.5.-.-</ecNumber>
        </recommendedName>
    </domain>
</protein>
<proteinExistence type="inferred from homology"/>
<reference key="1">
    <citation type="submission" date="2006-03" db="EMBL/GenBank/DDBJ databases">
        <title>Complete sequence of Shewanella denitrificans OS217.</title>
        <authorList>
            <consortium name="US DOE Joint Genome Institute"/>
            <person name="Copeland A."/>
            <person name="Lucas S."/>
            <person name="Lapidus A."/>
            <person name="Barry K."/>
            <person name="Detter J.C."/>
            <person name="Glavina del Rio T."/>
            <person name="Hammon N."/>
            <person name="Israni S."/>
            <person name="Dalin E."/>
            <person name="Tice H."/>
            <person name="Pitluck S."/>
            <person name="Brettin T."/>
            <person name="Bruce D."/>
            <person name="Han C."/>
            <person name="Tapia R."/>
            <person name="Gilna P."/>
            <person name="Kiss H."/>
            <person name="Schmutz J."/>
            <person name="Larimer F."/>
            <person name="Land M."/>
            <person name="Hauser L."/>
            <person name="Kyrpides N."/>
            <person name="Lykidis A."/>
            <person name="Richardson P."/>
        </authorList>
    </citation>
    <scope>NUCLEOTIDE SEQUENCE [LARGE SCALE GENOMIC DNA]</scope>
    <source>
        <strain>OS217 / ATCC BAA-1090 / DSM 15013</strain>
    </source>
</reference>
<gene>
    <name evidence="1" type="primary">mnmC</name>
    <name type="ordered locus">Sden_1481</name>
</gene>
<name>MNMC_SHEDO</name>
<organism>
    <name type="scientific">Shewanella denitrificans (strain OS217 / ATCC BAA-1090 / DSM 15013)</name>
    <dbReference type="NCBI Taxonomy" id="318161"/>
    <lineage>
        <taxon>Bacteria</taxon>
        <taxon>Pseudomonadati</taxon>
        <taxon>Pseudomonadota</taxon>
        <taxon>Gammaproteobacteria</taxon>
        <taxon>Alteromonadales</taxon>
        <taxon>Shewanellaceae</taxon>
        <taxon>Shewanella</taxon>
    </lineage>
</organism>
<dbReference type="EC" id="2.1.1.61" evidence="1"/>
<dbReference type="EC" id="1.5.-.-" evidence="1"/>
<dbReference type="EMBL" id="CP000302">
    <property type="protein sequence ID" value="ABE54766.1"/>
    <property type="molecule type" value="Genomic_DNA"/>
</dbReference>
<dbReference type="RefSeq" id="WP_011495924.1">
    <property type="nucleotide sequence ID" value="NC_007954.1"/>
</dbReference>
<dbReference type="SMR" id="Q12P60"/>
<dbReference type="STRING" id="318161.Sden_1481"/>
<dbReference type="KEGG" id="sdn:Sden_1481"/>
<dbReference type="eggNOG" id="COG0665">
    <property type="taxonomic scope" value="Bacteria"/>
</dbReference>
<dbReference type="eggNOG" id="COG4121">
    <property type="taxonomic scope" value="Bacteria"/>
</dbReference>
<dbReference type="HOGENOM" id="CLU_022427_2_1_6"/>
<dbReference type="Proteomes" id="UP000001982">
    <property type="component" value="Chromosome"/>
</dbReference>
<dbReference type="GO" id="GO:0005737">
    <property type="term" value="C:cytoplasm"/>
    <property type="evidence" value="ECO:0007669"/>
    <property type="project" value="UniProtKB-SubCell"/>
</dbReference>
<dbReference type="GO" id="GO:0050660">
    <property type="term" value="F:flavin adenine dinucleotide binding"/>
    <property type="evidence" value="ECO:0007669"/>
    <property type="project" value="UniProtKB-UniRule"/>
</dbReference>
<dbReference type="GO" id="GO:0016645">
    <property type="term" value="F:oxidoreductase activity, acting on the CH-NH group of donors"/>
    <property type="evidence" value="ECO:0007669"/>
    <property type="project" value="InterPro"/>
</dbReference>
<dbReference type="GO" id="GO:0004808">
    <property type="term" value="F:tRNA (5-methylaminomethyl-2-thiouridylate)(34)-methyltransferase activity"/>
    <property type="evidence" value="ECO:0007669"/>
    <property type="project" value="UniProtKB-EC"/>
</dbReference>
<dbReference type="GO" id="GO:0032259">
    <property type="term" value="P:methylation"/>
    <property type="evidence" value="ECO:0007669"/>
    <property type="project" value="UniProtKB-KW"/>
</dbReference>
<dbReference type="GO" id="GO:0002098">
    <property type="term" value="P:tRNA wobble uridine modification"/>
    <property type="evidence" value="ECO:0007669"/>
    <property type="project" value="TreeGrafter"/>
</dbReference>
<dbReference type="Gene3D" id="3.30.9.10">
    <property type="entry name" value="D-Amino Acid Oxidase, subunit A, domain 2"/>
    <property type="match status" value="1"/>
</dbReference>
<dbReference type="Gene3D" id="3.50.50.60">
    <property type="entry name" value="FAD/NAD(P)-binding domain"/>
    <property type="match status" value="1"/>
</dbReference>
<dbReference type="Gene3D" id="3.40.50.150">
    <property type="entry name" value="Vaccinia Virus protein VP39"/>
    <property type="match status" value="1"/>
</dbReference>
<dbReference type="HAMAP" id="MF_01102">
    <property type="entry name" value="MnmC"/>
    <property type="match status" value="1"/>
</dbReference>
<dbReference type="InterPro" id="IPR006076">
    <property type="entry name" value="FAD-dep_OxRdtase"/>
</dbReference>
<dbReference type="InterPro" id="IPR036188">
    <property type="entry name" value="FAD/NAD-bd_sf"/>
</dbReference>
<dbReference type="InterPro" id="IPR029063">
    <property type="entry name" value="SAM-dependent_MTases_sf"/>
</dbReference>
<dbReference type="InterPro" id="IPR023032">
    <property type="entry name" value="tRNA_MAMT_biosynth_bifunc_MnmC"/>
</dbReference>
<dbReference type="InterPro" id="IPR017610">
    <property type="entry name" value="tRNA_S-uridine_synth_MnmC_C"/>
</dbReference>
<dbReference type="NCBIfam" id="TIGR03197">
    <property type="entry name" value="MnmC_Cterm"/>
    <property type="match status" value="1"/>
</dbReference>
<dbReference type="PANTHER" id="PTHR13847">
    <property type="entry name" value="SARCOSINE DEHYDROGENASE-RELATED"/>
    <property type="match status" value="1"/>
</dbReference>
<dbReference type="PANTHER" id="PTHR13847:SF283">
    <property type="entry name" value="TRNA 5-METHYLAMINOMETHYL-2-THIOURIDINE BIOSYNTHESIS BIFUNCTIONAL PROTEIN MNMC"/>
    <property type="match status" value="1"/>
</dbReference>
<dbReference type="Pfam" id="PF01266">
    <property type="entry name" value="DAO"/>
    <property type="match status" value="1"/>
</dbReference>
<dbReference type="SUPFAM" id="SSF51905">
    <property type="entry name" value="FAD/NAD(P)-binding domain"/>
    <property type="match status" value="1"/>
</dbReference>